<reference key="1">
    <citation type="journal article" date="2000" name="Science">
        <title>The genome sequence of Drosophila melanogaster.</title>
        <authorList>
            <person name="Adams M.D."/>
            <person name="Celniker S.E."/>
            <person name="Holt R.A."/>
            <person name="Evans C.A."/>
            <person name="Gocayne J.D."/>
            <person name="Amanatides P.G."/>
            <person name="Scherer S.E."/>
            <person name="Li P.W."/>
            <person name="Hoskins R.A."/>
            <person name="Galle R.F."/>
            <person name="George R.A."/>
            <person name="Lewis S.E."/>
            <person name="Richards S."/>
            <person name="Ashburner M."/>
            <person name="Henderson S.N."/>
            <person name="Sutton G.G."/>
            <person name="Wortman J.R."/>
            <person name="Yandell M.D."/>
            <person name="Zhang Q."/>
            <person name="Chen L.X."/>
            <person name="Brandon R.C."/>
            <person name="Rogers Y.-H.C."/>
            <person name="Blazej R.G."/>
            <person name="Champe M."/>
            <person name="Pfeiffer B.D."/>
            <person name="Wan K.H."/>
            <person name="Doyle C."/>
            <person name="Baxter E.G."/>
            <person name="Helt G."/>
            <person name="Nelson C.R."/>
            <person name="Miklos G.L.G."/>
            <person name="Abril J.F."/>
            <person name="Agbayani A."/>
            <person name="An H.-J."/>
            <person name="Andrews-Pfannkoch C."/>
            <person name="Baldwin D."/>
            <person name="Ballew R.M."/>
            <person name="Basu A."/>
            <person name="Baxendale J."/>
            <person name="Bayraktaroglu L."/>
            <person name="Beasley E.M."/>
            <person name="Beeson K.Y."/>
            <person name="Benos P.V."/>
            <person name="Berman B.P."/>
            <person name="Bhandari D."/>
            <person name="Bolshakov S."/>
            <person name="Borkova D."/>
            <person name="Botchan M.R."/>
            <person name="Bouck J."/>
            <person name="Brokstein P."/>
            <person name="Brottier P."/>
            <person name="Burtis K.C."/>
            <person name="Busam D.A."/>
            <person name="Butler H."/>
            <person name="Cadieu E."/>
            <person name="Center A."/>
            <person name="Chandra I."/>
            <person name="Cherry J.M."/>
            <person name="Cawley S."/>
            <person name="Dahlke C."/>
            <person name="Davenport L.B."/>
            <person name="Davies P."/>
            <person name="de Pablos B."/>
            <person name="Delcher A."/>
            <person name="Deng Z."/>
            <person name="Mays A.D."/>
            <person name="Dew I."/>
            <person name="Dietz S.M."/>
            <person name="Dodson K."/>
            <person name="Doup L.E."/>
            <person name="Downes M."/>
            <person name="Dugan-Rocha S."/>
            <person name="Dunkov B.C."/>
            <person name="Dunn P."/>
            <person name="Durbin K.J."/>
            <person name="Evangelista C.C."/>
            <person name="Ferraz C."/>
            <person name="Ferriera S."/>
            <person name="Fleischmann W."/>
            <person name="Fosler C."/>
            <person name="Gabrielian A.E."/>
            <person name="Garg N.S."/>
            <person name="Gelbart W.M."/>
            <person name="Glasser K."/>
            <person name="Glodek A."/>
            <person name="Gong F."/>
            <person name="Gorrell J.H."/>
            <person name="Gu Z."/>
            <person name="Guan P."/>
            <person name="Harris M."/>
            <person name="Harris N.L."/>
            <person name="Harvey D.A."/>
            <person name="Heiman T.J."/>
            <person name="Hernandez J.R."/>
            <person name="Houck J."/>
            <person name="Hostin D."/>
            <person name="Houston K.A."/>
            <person name="Howland T.J."/>
            <person name="Wei M.-H."/>
            <person name="Ibegwam C."/>
            <person name="Jalali M."/>
            <person name="Kalush F."/>
            <person name="Karpen G.H."/>
            <person name="Ke Z."/>
            <person name="Kennison J.A."/>
            <person name="Ketchum K.A."/>
            <person name="Kimmel B.E."/>
            <person name="Kodira C.D."/>
            <person name="Kraft C.L."/>
            <person name="Kravitz S."/>
            <person name="Kulp D."/>
            <person name="Lai Z."/>
            <person name="Lasko P."/>
            <person name="Lei Y."/>
            <person name="Levitsky A.A."/>
            <person name="Li J.H."/>
            <person name="Li Z."/>
            <person name="Liang Y."/>
            <person name="Lin X."/>
            <person name="Liu X."/>
            <person name="Mattei B."/>
            <person name="McIntosh T.C."/>
            <person name="McLeod M.P."/>
            <person name="McPherson D."/>
            <person name="Merkulov G."/>
            <person name="Milshina N.V."/>
            <person name="Mobarry C."/>
            <person name="Morris J."/>
            <person name="Moshrefi A."/>
            <person name="Mount S.M."/>
            <person name="Moy M."/>
            <person name="Murphy B."/>
            <person name="Murphy L."/>
            <person name="Muzny D.M."/>
            <person name="Nelson D.L."/>
            <person name="Nelson D.R."/>
            <person name="Nelson K.A."/>
            <person name="Nixon K."/>
            <person name="Nusskern D.R."/>
            <person name="Pacleb J.M."/>
            <person name="Palazzolo M."/>
            <person name="Pittman G.S."/>
            <person name="Pan S."/>
            <person name="Pollard J."/>
            <person name="Puri V."/>
            <person name="Reese M.G."/>
            <person name="Reinert K."/>
            <person name="Remington K."/>
            <person name="Saunders R.D.C."/>
            <person name="Scheeler F."/>
            <person name="Shen H."/>
            <person name="Shue B.C."/>
            <person name="Siden-Kiamos I."/>
            <person name="Simpson M."/>
            <person name="Skupski M.P."/>
            <person name="Smith T.J."/>
            <person name="Spier E."/>
            <person name="Spradling A.C."/>
            <person name="Stapleton M."/>
            <person name="Strong R."/>
            <person name="Sun E."/>
            <person name="Svirskas R."/>
            <person name="Tector C."/>
            <person name="Turner R."/>
            <person name="Venter E."/>
            <person name="Wang A.H."/>
            <person name="Wang X."/>
            <person name="Wang Z.-Y."/>
            <person name="Wassarman D.A."/>
            <person name="Weinstock G.M."/>
            <person name="Weissenbach J."/>
            <person name="Williams S.M."/>
            <person name="Woodage T."/>
            <person name="Worley K.C."/>
            <person name="Wu D."/>
            <person name="Yang S."/>
            <person name="Yao Q.A."/>
            <person name="Ye J."/>
            <person name="Yeh R.-F."/>
            <person name="Zaveri J.S."/>
            <person name="Zhan M."/>
            <person name="Zhang G."/>
            <person name="Zhao Q."/>
            <person name="Zheng L."/>
            <person name="Zheng X.H."/>
            <person name="Zhong F.N."/>
            <person name="Zhong W."/>
            <person name="Zhou X."/>
            <person name="Zhu S.C."/>
            <person name="Zhu X."/>
            <person name="Smith H.O."/>
            <person name="Gibbs R.A."/>
            <person name="Myers E.W."/>
            <person name="Rubin G.M."/>
            <person name="Venter J.C."/>
        </authorList>
    </citation>
    <scope>NUCLEOTIDE SEQUENCE [LARGE SCALE GENOMIC DNA]</scope>
    <source>
        <strain>Berkeley</strain>
    </source>
</reference>
<reference key="2">
    <citation type="journal article" date="2002" name="Genome Biol.">
        <title>Annotation of the Drosophila melanogaster euchromatic genome: a systematic review.</title>
        <authorList>
            <person name="Misra S."/>
            <person name="Crosby M.A."/>
            <person name="Mungall C.J."/>
            <person name="Matthews B.B."/>
            <person name="Campbell K.S."/>
            <person name="Hradecky P."/>
            <person name="Huang Y."/>
            <person name="Kaminker J.S."/>
            <person name="Millburn G.H."/>
            <person name="Prochnik S.E."/>
            <person name="Smith C.D."/>
            <person name="Tupy J.L."/>
            <person name="Whitfield E.J."/>
            <person name="Bayraktaroglu L."/>
            <person name="Berman B.P."/>
            <person name="Bettencourt B.R."/>
            <person name="Celniker S.E."/>
            <person name="de Grey A.D.N.J."/>
            <person name="Drysdale R.A."/>
            <person name="Harris N.L."/>
            <person name="Richter J."/>
            <person name="Russo S."/>
            <person name="Schroeder A.J."/>
            <person name="Shu S.Q."/>
            <person name="Stapleton M."/>
            <person name="Yamada C."/>
            <person name="Ashburner M."/>
            <person name="Gelbart W.M."/>
            <person name="Rubin G.M."/>
            <person name="Lewis S.E."/>
        </authorList>
    </citation>
    <scope>GENOME REANNOTATION</scope>
    <source>
        <strain>Berkeley</strain>
    </source>
</reference>
<evidence type="ECO:0000250" key="1"/>
<evidence type="ECO:0000255" key="2"/>
<evidence type="ECO:0000305" key="3"/>
<dbReference type="EMBL" id="AE014296">
    <property type="protein sequence ID" value="AAN12092.3"/>
    <property type="molecule type" value="Genomic_DNA"/>
</dbReference>
<dbReference type="RefSeq" id="NP_729162.3">
    <property type="nucleotide sequence ID" value="NM_168164.3"/>
</dbReference>
<dbReference type="SMR" id="P82983"/>
<dbReference type="FunCoup" id="P82983">
    <property type="interactions" value="8"/>
</dbReference>
<dbReference type="STRING" id="7227.FBpp0076713"/>
<dbReference type="PaxDb" id="7227-FBpp0076713"/>
<dbReference type="EnsemblMetazoa" id="FBtr0077005">
    <property type="protein sequence ID" value="FBpp0076713"/>
    <property type="gene ID" value="FBgn0041624"/>
</dbReference>
<dbReference type="GeneID" id="318012"/>
<dbReference type="KEGG" id="dme:Dmel_CG32402"/>
<dbReference type="AGR" id="FB:FBgn0041624"/>
<dbReference type="CTD" id="318012"/>
<dbReference type="FlyBase" id="FBgn0041624">
    <property type="gene designation" value="Or65b"/>
</dbReference>
<dbReference type="VEuPathDB" id="VectorBase:FBgn0041624"/>
<dbReference type="eggNOG" id="ENOG502SXXU">
    <property type="taxonomic scope" value="Eukaryota"/>
</dbReference>
<dbReference type="GeneTree" id="ENSGT00940000166470"/>
<dbReference type="HOGENOM" id="CLU_055891_1_0_1"/>
<dbReference type="InParanoid" id="P82983"/>
<dbReference type="OMA" id="WYFVMAF"/>
<dbReference type="OrthoDB" id="6604226at2759"/>
<dbReference type="PhylomeDB" id="P82983"/>
<dbReference type="BioGRID-ORCS" id="318012">
    <property type="hits" value="0 hits in 1 CRISPR screen"/>
</dbReference>
<dbReference type="GenomeRNAi" id="318012"/>
<dbReference type="PRO" id="PR:P82983"/>
<dbReference type="Proteomes" id="UP000000803">
    <property type="component" value="Chromosome 3L"/>
</dbReference>
<dbReference type="Bgee" id="FBgn0041624">
    <property type="expression patterns" value="Expressed in adult olfactory receptor neuron Or65 (Drosophila) in antenna and 5 other cell types or tissues"/>
</dbReference>
<dbReference type="ExpressionAtlas" id="P82983">
    <property type="expression patterns" value="baseline and differential"/>
</dbReference>
<dbReference type="GO" id="GO:0034703">
    <property type="term" value="C:cation channel complex"/>
    <property type="evidence" value="ECO:0000250"/>
    <property type="project" value="FlyBase"/>
</dbReference>
<dbReference type="GO" id="GO:0032590">
    <property type="term" value="C:dendrite membrane"/>
    <property type="evidence" value="ECO:0000250"/>
    <property type="project" value="FlyBase"/>
</dbReference>
<dbReference type="GO" id="GO:0005886">
    <property type="term" value="C:plasma membrane"/>
    <property type="evidence" value="ECO:0000250"/>
    <property type="project" value="FlyBase"/>
</dbReference>
<dbReference type="GO" id="GO:0170020">
    <property type="term" value="F:ionotropic olfactory receptor activity"/>
    <property type="evidence" value="ECO:0000250"/>
    <property type="project" value="FlyBase"/>
</dbReference>
<dbReference type="GO" id="GO:0005549">
    <property type="term" value="F:odorant binding"/>
    <property type="evidence" value="ECO:0000250"/>
    <property type="project" value="FlyBase"/>
</dbReference>
<dbReference type="GO" id="GO:0004984">
    <property type="term" value="F:olfactory receptor activity"/>
    <property type="evidence" value="ECO:0000318"/>
    <property type="project" value="GO_Central"/>
</dbReference>
<dbReference type="GO" id="GO:0050911">
    <property type="term" value="P:detection of chemical stimulus involved in sensory perception of smell"/>
    <property type="evidence" value="ECO:0000250"/>
    <property type="project" value="FlyBase"/>
</dbReference>
<dbReference type="GO" id="GO:0007165">
    <property type="term" value="P:signal transduction"/>
    <property type="evidence" value="ECO:0007669"/>
    <property type="project" value="UniProtKB-KW"/>
</dbReference>
<dbReference type="InterPro" id="IPR004117">
    <property type="entry name" value="7tm6_olfct_rcpt"/>
</dbReference>
<dbReference type="PANTHER" id="PTHR21137">
    <property type="entry name" value="ODORANT RECEPTOR"/>
    <property type="match status" value="1"/>
</dbReference>
<dbReference type="PANTHER" id="PTHR21137:SF35">
    <property type="entry name" value="ODORANT RECEPTOR 19A-RELATED"/>
    <property type="match status" value="1"/>
</dbReference>
<dbReference type="Pfam" id="PF02949">
    <property type="entry name" value="7tm_6"/>
    <property type="match status" value="1"/>
</dbReference>
<keyword id="KW-1003">Cell membrane</keyword>
<keyword id="KW-0472">Membrane</keyword>
<keyword id="KW-0552">Olfaction</keyword>
<keyword id="KW-0675">Receptor</keyword>
<keyword id="KW-1185">Reference proteome</keyword>
<keyword id="KW-0716">Sensory transduction</keyword>
<keyword id="KW-0807">Transducer</keyword>
<keyword id="KW-0812">Transmembrane</keyword>
<keyword id="KW-1133">Transmembrane helix</keyword>
<gene>
    <name type="primary">Or65b</name>
    <name type="ORF">CG32402</name>
</gene>
<feature type="chain" id="PRO_0000174260" description="Putative odorant receptor 65b">
    <location>
        <begin position="1"/>
        <end position="406"/>
    </location>
</feature>
<feature type="topological domain" description="Cytoplasmic" evidence="2">
    <location>
        <begin position="1"/>
        <end position="55"/>
    </location>
</feature>
<feature type="transmembrane region" description="Helical; Name=1" evidence="2">
    <location>
        <begin position="56"/>
        <end position="76"/>
    </location>
</feature>
<feature type="topological domain" description="Extracellular" evidence="2">
    <location>
        <begin position="77"/>
        <end position="88"/>
    </location>
</feature>
<feature type="transmembrane region" description="Helical; Name=2" evidence="2">
    <location>
        <begin position="89"/>
        <end position="109"/>
    </location>
</feature>
<feature type="topological domain" description="Cytoplasmic" evidence="2">
    <location>
        <begin position="110"/>
        <end position="144"/>
    </location>
</feature>
<feature type="transmembrane region" description="Helical; Name=3" evidence="2">
    <location>
        <begin position="145"/>
        <end position="165"/>
    </location>
</feature>
<feature type="topological domain" description="Extracellular" evidence="2">
    <location>
        <begin position="166"/>
        <end position="218"/>
    </location>
</feature>
<feature type="transmembrane region" description="Helical; Name=4" evidence="2">
    <location>
        <begin position="219"/>
        <end position="239"/>
    </location>
</feature>
<feature type="topological domain" description="Cytoplasmic" evidence="2">
    <location>
        <begin position="240"/>
        <end position="275"/>
    </location>
</feature>
<feature type="transmembrane region" description="Helical; Name=5" evidence="2">
    <location>
        <begin position="276"/>
        <end position="296"/>
    </location>
</feature>
<feature type="topological domain" description="Extracellular" evidence="2">
    <location>
        <begin position="297"/>
        <end position="307"/>
    </location>
</feature>
<feature type="transmembrane region" description="Helical; Name=6" evidence="2">
    <location>
        <begin position="308"/>
        <end position="328"/>
    </location>
</feature>
<feature type="topological domain" description="Cytoplasmic" evidence="2">
    <location>
        <begin position="329"/>
        <end position="381"/>
    </location>
</feature>
<feature type="transmembrane region" description="Helical; Name=7" evidence="2">
    <location>
        <begin position="382"/>
        <end position="402"/>
    </location>
</feature>
<feature type="topological domain" description="Extracellular" evidence="2">
    <location>
        <begin position="403"/>
        <end position="406"/>
    </location>
</feature>
<sequence>MDIQRFLKFYKVGWKTYRDPLMEASHSSIYYWREQMKAMALFTTTEERLLPYRSKWHTLVYIQMVIFFASMSFGLTESMGDHVQMGRDLAFILGAFFIIFKTYYFCWYGDELDQVISDLDALHPWAQKGPNPVEYQTGKRWYFVMAFFLATSWSFFLCILLLLLITSPMWVHQQNLPFHAAFPFQWHEKSLHPISHAIIYLFQSYFAVYCLTWLLCIEGLSICIYAEITFGIEVLCLELRQIHRHNYGLQELRMETNRLVKLHQKIVEILDRTNDVFHGTLIMQMGVNFSLVSLSVLEAVEARKDPKVVAQFAVLMLLALGHLSMWSYCGDQLSQKSLQISEAAYEAYDPTKGSKDVYRDLCVIIRRGQDPLIMRASPFPSFNLINYSAILNQCYGILTFLLKTLD</sequence>
<accession>P82983</accession>
<accession>Q8IQ67</accession>
<protein>
    <recommendedName>
        <fullName>Putative odorant receptor 65b</fullName>
    </recommendedName>
</protein>
<proteinExistence type="inferred from homology"/>
<organism>
    <name type="scientific">Drosophila melanogaster</name>
    <name type="common">Fruit fly</name>
    <dbReference type="NCBI Taxonomy" id="7227"/>
    <lineage>
        <taxon>Eukaryota</taxon>
        <taxon>Metazoa</taxon>
        <taxon>Ecdysozoa</taxon>
        <taxon>Arthropoda</taxon>
        <taxon>Hexapoda</taxon>
        <taxon>Insecta</taxon>
        <taxon>Pterygota</taxon>
        <taxon>Neoptera</taxon>
        <taxon>Endopterygota</taxon>
        <taxon>Diptera</taxon>
        <taxon>Brachycera</taxon>
        <taxon>Muscomorpha</taxon>
        <taxon>Ephydroidea</taxon>
        <taxon>Drosophilidae</taxon>
        <taxon>Drosophila</taxon>
        <taxon>Sophophora</taxon>
    </lineage>
</organism>
<comment type="function">
    <text evidence="1">Odorant receptor which mediates acceptance or avoidance behavior, depending on its substrates. The odorant receptor repertoire encodes a large collection of odor stimuli that vary widely in identity, intensity, and duration. May form a complex with Orco to form odorant-sensing units, providing sensitive and prolonged odorant signaling and calcium permeability (By similarity).</text>
</comment>
<comment type="subunit">
    <text evidence="1">Interacts with Orco. Complexes exist early in the endomembrane system in olfactory sensory neurons (OSNs), coupling these complexes to the conserved ciliary trafficking pathway (By similarity).</text>
</comment>
<comment type="subcellular location">
    <subcellularLocation>
        <location evidence="1">Cell membrane</location>
        <topology evidence="1">Multi-pass membrane protein</topology>
    </subcellularLocation>
</comment>
<comment type="miscellaneous">
    <text>The atypical heteromeric and topological design of the odorant receptors appears to be an insect-specific solution for odor recognition, making the OR/Orco complex an attractive target for the development of highly selective insect repellents to disrupt olfactory-mediated host-seeking behaviors of insect disease vectors. Odor-evoked OR currents are independent of known G-protein-coupled second messenger pathways.</text>
</comment>
<comment type="similarity">
    <text evidence="3">Belongs to the insect chemoreceptor superfamily. Heteromeric odorant receptor channel (TC 1.A.69) family. Or49a subfamily.</text>
</comment>
<name>OR65B_DROME</name>